<keyword id="KW-0002">3D-structure</keyword>
<keyword id="KW-1015">Disulfide bond</keyword>
<keyword id="KW-1043">Host membrane</keyword>
<keyword id="KW-0945">Host-virus interaction</keyword>
<keyword id="KW-0430">Lectin</keyword>
<keyword id="KW-0472">Membrane</keyword>
<keyword id="KW-1185">Reference proteome</keyword>
<keyword id="KW-0812">Transmembrane</keyword>
<keyword id="KW-1133">Transmembrane helix</keyword>
<keyword id="KW-0946">Virion</keyword>
<name>GP42_EBVB9</name>
<gene>
    <name type="ORF">BZLF2</name>
</gene>
<reference key="1">
    <citation type="journal article" date="1984" name="Nature">
        <title>DNA sequence and expression of the B95-8 Epstein-Barr virus genome.</title>
        <authorList>
            <person name="Baer R."/>
            <person name="Bankier A.T."/>
            <person name="Biggin M.D."/>
            <person name="Deininger P.L."/>
            <person name="Farrell P.J."/>
            <person name="Gibson T.J."/>
            <person name="Hatfull G."/>
            <person name="Hudson G.S."/>
            <person name="Satchwell S.C."/>
            <person name="Seguin C."/>
            <person name="Tuffnell P.S."/>
            <person name="Barrell B.G."/>
        </authorList>
    </citation>
    <scope>NUCLEOTIDE SEQUENCE [LARGE SCALE GENOMIC DNA]</scope>
</reference>
<reference key="2">
    <citation type="journal article" date="2003" name="Virology">
        <title>Updated Epstein-Barr virus (EBV) DNA sequence and analysis of a promoter for the BART (CST, BARF0) RNAs of EBV.</title>
        <authorList>
            <person name="de Jesus O."/>
            <person name="Smith P.R."/>
            <person name="Spender L.C."/>
            <person name="Elgueta Karstegl C."/>
            <person name="Niller H.H."/>
            <person name="Huang D."/>
            <person name="Farrell P.J."/>
        </authorList>
    </citation>
    <scope>GENOME REANNOTATION</scope>
</reference>
<reference key="3">
    <citation type="journal article" date="1998" name="J. Virol.">
        <title>Epstein-Barr virus uses different complexes of glycoproteins gH and gL to infect B lymphocytes and epithelial cells.</title>
        <authorList>
            <person name="Wang X."/>
            <person name="Kenyon W.J."/>
            <person name="Li Q."/>
            <person name="Mullberg J."/>
            <person name="Hutt-Fletcher L.M."/>
        </authorList>
    </citation>
    <scope>INTERACTION WITH GP25 AND GP85</scope>
</reference>
<reference key="4">
    <citation type="journal article" date="1997" name="J. Virol.">
        <title>Epstein-Barr virus uses HLA class II as a cofactor for infection of B lymphocytes.</title>
        <authorList>
            <person name="Li Q."/>
            <person name="Spriggs M.K."/>
            <person name="Kovats S."/>
            <person name="Turk S.M."/>
            <person name="Comeau M.R."/>
            <person name="Nepom B."/>
            <person name="Hutt-Fletcher L.M."/>
        </authorList>
    </citation>
    <scope>INTERACTION WITH HUMAN HLA-DRA</scope>
    <scope>FUNCTION</scope>
</reference>
<reference key="5">
    <citation type="journal article" date="2002" name="Nat. Med.">
        <title>Alternate replication in B cells and epithelial cells switches tropism of Epstein-Barr virus.</title>
        <authorList>
            <person name="Borza C.M."/>
            <person name="Hutt-Fletcher L.M."/>
        </authorList>
    </citation>
    <scope>FUNCTION</scope>
</reference>
<reference key="6">
    <citation type="journal article" date="2004" name="J. Virol.">
        <title>Mutational analyses of Epstein-Barr virus glycoprotein 42 reveal functional domains not involved in receptor binding but required for membrane fusion.</title>
        <authorList>
            <person name="Silva A.L."/>
            <person name="Omerovic J."/>
            <person name="Jardetzky T.S."/>
            <person name="Longnecker R."/>
        </authorList>
    </citation>
    <scope>MUTAGENESIS OF TYR-107; TRP-125; GLU-160; PHE-210 AND ARG-220</scope>
</reference>
<reference key="7">
    <citation type="journal article" date="2004" name="Proc. Natl. Acad. Sci. U.S.A.">
        <title>Proteins of purified Epstein-Barr virus.</title>
        <authorList>
            <person name="Johannsen E."/>
            <person name="Luftig M."/>
            <person name="Chase M.R."/>
            <person name="Weicksel S."/>
            <person name="Cahir-McFarland E."/>
            <person name="Illanes D."/>
            <person name="Sarracino D."/>
            <person name="Kieff E."/>
        </authorList>
    </citation>
    <scope>SUBCELLULAR LOCATION</scope>
</reference>
<reference key="8">
    <citation type="journal article" date="2005" name="J. Virol.">
        <title>Epstein-Barr virus gp42 is posttranslationally modified to produce soluble gp42 that mediates HLA class II immune evasion.</title>
        <authorList>
            <person name="Ressing M.E."/>
            <person name="van Leeuwen D."/>
            <person name="Verreck F.A."/>
            <person name="Keating S."/>
            <person name="Gomez R."/>
            <person name="Franken K.L."/>
            <person name="Ottenhoff T.H."/>
            <person name="Spriggs M."/>
            <person name="Schumacher T.N."/>
            <person name="Hutt-Fletcher L.M."/>
            <person name="Rowe M."/>
            <person name="Wiertz E.J."/>
        </authorList>
    </citation>
    <scope>FUNCTION</scope>
    <scope>SOLUBLE FORM</scope>
</reference>
<reference key="9">
    <citation type="journal article" date="2007" name="J. Virol.">
        <title>Binding-site interactions between Epstein-Barr virus fusion proteins gp42 and gH/gL reveal a peptide that inhibits both epithelial and B-cell membrane fusion.</title>
        <authorList>
            <person name="Kirschner A.N."/>
            <person name="Lowrey A.S."/>
            <person name="Longnecker R."/>
            <person name="Jardetzky T.S."/>
        </authorList>
    </citation>
    <scope>INTERACTION WITH GP25 AND GP85</scope>
</reference>
<reference key="10">
    <citation type="journal article" date="2002" name="Mol. Cell">
        <title>Structure of the Epstein-Barr virus gp42 protein bound to the MHC class II receptor HLA-DR1.</title>
        <authorList>
            <person name="Mullen M.M."/>
            <person name="Haan K.M."/>
            <person name="Longnecker R."/>
            <person name="Jardetzky T.S."/>
        </authorList>
    </citation>
    <scope>X-RAY CRYSTALLOGRAPHY (2.65 ANGSTROMS) OF 86-221</scope>
    <scope>INTERACTION WITH HUMAN HLA-DRA AND HLA-DRB1</scope>
</reference>
<accession>P03205</accession>
<accession>Q777E6</accession>
<feature type="chain" id="PRO_0000116279" description="Glycoprotein 42">
    <location>
        <begin position="1"/>
        <end position="223"/>
    </location>
</feature>
<feature type="chain" id="PRO_0000433226" description="Soluble gp42">
    <location>
        <begin position="34"/>
        <end position="223"/>
    </location>
</feature>
<feature type="topological domain" description="Intravirion" evidence="1">
    <location>
        <begin position="1"/>
        <end position="8"/>
    </location>
</feature>
<feature type="transmembrane region" description="Helical" evidence="1">
    <location>
        <begin position="9"/>
        <end position="29"/>
    </location>
</feature>
<feature type="topological domain" description="Virion surface" evidence="1">
    <location>
        <begin position="30"/>
        <end position="223"/>
    </location>
</feature>
<feature type="domain" description="C-type lectin">
    <location>
        <begin position="111"/>
        <end position="217"/>
    </location>
</feature>
<feature type="site" description="Potential cleavage" evidence="10">
    <location>
        <begin position="33"/>
        <end position="34"/>
    </location>
</feature>
<feature type="disulfide bond">
    <location>
        <begin position="99"/>
        <end position="138"/>
    </location>
</feature>
<feature type="disulfide bond">
    <location>
        <begin position="102"/>
        <end position="115"/>
    </location>
</feature>
<feature type="disulfide bond">
    <location>
        <begin position="128"/>
        <end position="214"/>
    </location>
</feature>
<feature type="disulfide bond">
    <location>
        <begin position="132"/>
        <end position="216"/>
    </location>
</feature>
<feature type="disulfide bond">
    <location>
        <begin position="192"/>
        <end position="208"/>
    </location>
</feature>
<feature type="mutagenesis site" description="Loss of HLA class II binding and fusion competence." evidence="4">
    <original>Y</original>
    <variation>A</variation>
    <location>
        <position position="107"/>
    </location>
</feature>
<feature type="mutagenesis site" description="Loss of HLA class II binding and fusion competence." evidence="4">
    <original>W</original>
    <variation>G</variation>
    <location>
        <position position="125"/>
    </location>
</feature>
<feature type="mutagenesis site" description="Loss of HLA class II binding and fusion competence." evidence="4">
    <original>E</original>
    <variation>A</variation>
    <location>
        <position position="160"/>
    </location>
</feature>
<feature type="mutagenesis site" description="Binds to HLA class II but unable to mediate fusion." evidence="4">
    <original>F</original>
    <variation>A</variation>
    <location>
        <position position="210"/>
    </location>
</feature>
<feature type="mutagenesis site" description="Loss of HLA class II binding and fusion competence." evidence="4">
    <original>R</original>
    <variation>A</variation>
    <location>
        <position position="220"/>
    </location>
</feature>
<feature type="turn" evidence="12">
    <location>
        <begin position="66"/>
        <end position="70"/>
    </location>
</feature>
<feature type="strand" evidence="13">
    <location>
        <begin position="74"/>
        <end position="76"/>
    </location>
</feature>
<feature type="strand" evidence="14">
    <location>
        <begin position="92"/>
        <end position="94"/>
    </location>
</feature>
<feature type="turn" evidence="11">
    <location>
        <begin position="104"/>
        <end position="106"/>
    </location>
</feature>
<feature type="strand" evidence="11">
    <location>
        <begin position="108"/>
        <end position="111"/>
    </location>
</feature>
<feature type="strand" evidence="11">
    <location>
        <begin position="114"/>
        <end position="118"/>
    </location>
</feature>
<feature type="helix" evidence="11">
    <location>
        <begin position="127"/>
        <end position="135"/>
    </location>
</feature>
<feature type="strand" evidence="11">
    <location>
        <begin position="139"/>
        <end position="141"/>
    </location>
</feature>
<feature type="turn" evidence="11">
    <location>
        <begin position="146"/>
        <end position="148"/>
    </location>
</feature>
<feature type="helix" evidence="11">
    <location>
        <begin position="149"/>
        <end position="153"/>
    </location>
</feature>
<feature type="strand" evidence="11">
    <location>
        <begin position="161"/>
        <end position="164"/>
    </location>
</feature>
<feature type="strand" evidence="15">
    <location>
        <begin position="170"/>
        <end position="172"/>
    </location>
</feature>
<feature type="strand" evidence="11">
    <location>
        <begin position="174"/>
        <end position="176"/>
    </location>
</feature>
<feature type="strand" evidence="11">
    <location>
        <begin position="179"/>
        <end position="182"/>
    </location>
</feature>
<feature type="strand" evidence="11">
    <location>
        <begin position="187"/>
        <end position="191"/>
    </location>
</feature>
<feature type="strand" evidence="11">
    <location>
        <begin position="193"/>
        <end position="198"/>
    </location>
</feature>
<feature type="strand" evidence="15">
    <location>
        <begin position="203"/>
        <end position="206"/>
    </location>
</feature>
<feature type="strand" evidence="11">
    <location>
        <begin position="214"/>
        <end position="219"/>
    </location>
</feature>
<dbReference type="EMBL" id="V01555">
    <property type="protein sequence ID" value="CAA24860.1"/>
    <property type="molecule type" value="Genomic_DNA"/>
</dbReference>
<dbReference type="EMBL" id="AJ507799">
    <property type="protein sequence ID" value="CAD53422.1"/>
    <property type="molecule type" value="Genomic_DNA"/>
</dbReference>
<dbReference type="PIR" id="F43042">
    <property type="entry name" value="QQBE26"/>
</dbReference>
<dbReference type="RefSeq" id="YP_401672.1">
    <property type="nucleotide sequence ID" value="NC_007605.1"/>
</dbReference>
<dbReference type="PDB" id="1KG0">
    <property type="method" value="X-ray"/>
    <property type="resolution" value="2.65 A"/>
    <property type="chains" value="C=86-221"/>
</dbReference>
<dbReference type="PDB" id="3FD4">
    <property type="method" value="X-ray"/>
    <property type="resolution" value="2.40 A"/>
    <property type="chains" value="A/B=33-223"/>
</dbReference>
<dbReference type="PDB" id="5W0K">
    <property type="method" value="X-ray"/>
    <property type="resolution" value="3.10 A"/>
    <property type="chains" value="X/Y=47-81"/>
</dbReference>
<dbReference type="PDB" id="8TNN">
    <property type="method" value="X-ray"/>
    <property type="resolution" value="3.36 A"/>
    <property type="chains" value="C/F=33-223"/>
</dbReference>
<dbReference type="PDB" id="8TNT">
    <property type="method" value="X-ray"/>
    <property type="resolution" value="3.15 A"/>
    <property type="chains" value="C=33-223"/>
</dbReference>
<dbReference type="PDB" id="8TOO">
    <property type="method" value="X-ray"/>
    <property type="resolution" value="2.60 A"/>
    <property type="chains" value="I/J/K/L=85-223"/>
</dbReference>
<dbReference type="PDBsum" id="1KG0"/>
<dbReference type="PDBsum" id="3FD4"/>
<dbReference type="PDBsum" id="5W0K"/>
<dbReference type="PDBsum" id="8TNN"/>
<dbReference type="PDBsum" id="8TNT"/>
<dbReference type="PDBsum" id="8TOO"/>
<dbReference type="SMR" id="P03205"/>
<dbReference type="BioGRID" id="971787">
    <property type="interactions" value="1"/>
</dbReference>
<dbReference type="IntAct" id="P03205">
    <property type="interactions" value="1"/>
</dbReference>
<dbReference type="MINT" id="P03205"/>
<dbReference type="TCDB" id="1.G.21.1.1">
    <property type="family name" value="the epstein barr virus (human herpes virus 4) gp42 (gp42) family"/>
</dbReference>
<dbReference type="DNASU" id="3783745"/>
<dbReference type="GeneID" id="3783745"/>
<dbReference type="KEGG" id="vg:3783745"/>
<dbReference type="SIGNOR" id="P03205"/>
<dbReference type="EvolutionaryTrace" id="P03205"/>
<dbReference type="Proteomes" id="UP000153037">
    <property type="component" value="Segment"/>
</dbReference>
<dbReference type="GO" id="GO:0033644">
    <property type="term" value="C:host cell membrane"/>
    <property type="evidence" value="ECO:0007669"/>
    <property type="project" value="UniProtKB-SubCell"/>
</dbReference>
<dbReference type="GO" id="GO:0016020">
    <property type="term" value="C:membrane"/>
    <property type="evidence" value="ECO:0007669"/>
    <property type="project" value="UniProtKB-KW"/>
</dbReference>
<dbReference type="GO" id="GO:0055036">
    <property type="term" value="C:virion membrane"/>
    <property type="evidence" value="ECO:0007669"/>
    <property type="project" value="UniProtKB-SubCell"/>
</dbReference>
<dbReference type="GO" id="GO:0030246">
    <property type="term" value="F:carbohydrate binding"/>
    <property type="evidence" value="ECO:0007669"/>
    <property type="project" value="UniProtKB-KW"/>
</dbReference>
<dbReference type="Gene3D" id="3.10.100.10">
    <property type="entry name" value="Mannose-Binding Protein A, subunit A"/>
    <property type="match status" value="1"/>
</dbReference>
<dbReference type="InterPro" id="IPR016186">
    <property type="entry name" value="C-type_lectin-like/link_sf"/>
</dbReference>
<dbReference type="InterPro" id="IPR016187">
    <property type="entry name" value="CTDL_fold"/>
</dbReference>
<dbReference type="SUPFAM" id="SSF56436">
    <property type="entry name" value="C-type lectin-like"/>
    <property type="match status" value="1"/>
</dbReference>
<sequence>MVSFKQVRVPLFTAIALVIVLLLAYFLPPRVRGGGRVAAAAITWVPKPNVEVWPVDPPPPVNFNKTAEQEYGDKEVKLPHWTPTLHTFQVPQNYTKANCTYCNTREYTFSYKGCCFYFTKKKHTWNGCFQACAELYPCTYFYGPTPDILPVVTRNLNAIESLWVGVYRVGEGNWTSLDGGTFKVYQIFGSHCTYVSKFSTVPVSHHECSFLKPCLCVSQRSNS</sequence>
<organism>
    <name type="scientific">Epstein-Barr virus (strain B95-8)</name>
    <name type="common">HHV-4</name>
    <name type="synonym">Human herpesvirus 4</name>
    <dbReference type="NCBI Taxonomy" id="10377"/>
    <lineage>
        <taxon>Viruses</taxon>
        <taxon>Duplodnaviria</taxon>
        <taxon>Heunggongvirae</taxon>
        <taxon>Peploviricota</taxon>
        <taxon>Herviviricetes</taxon>
        <taxon>Herpesvirales</taxon>
        <taxon>Orthoherpesviridae</taxon>
        <taxon>Gammaherpesvirinae</taxon>
        <taxon>Lymphocryptovirus</taxon>
        <taxon>Lymphocryptovirus humangamma4</taxon>
        <taxon>Epstein-Barr virus (strain GD1)</taxon>
    </lineage>
</organism>
<organismHost>
    <name type="scientific">Homo sapiens</name>
    <name type="common">Human</name>
    <dbReference type="NCBI Taxonomy" id="9606"/>
</organismHost>
<protein>
    <recommendedName>
        <fullName>Glycoprotein 42</fullName>
        <shortName>gp42</shortName>
    </recommendedName>
    <component>
        <recommendedName>
            <fullName>Soluble gp42</fullName>
        </recommendedName>
    </component>
</protein>
<comment type="function">
    <text evidence="3 6 8">Plays a role in virion attachment to host B-lymphocytes, through binding to leukocyte antigen (HLA) class II and subsequently participates in fusion of the virion with host membranes. May act as a tropism switch that directs fusion with B-lymphocytes and inhibits fusion with epithelial cells. Additionally, hampers T-cell recognition via HLA class II molecules through steric hindrance of T-cell receptor-class II-peptide interaction.</text>
</comment>
<comment type="function">
    <text evidence="6">Soluble gp42 inhibits HLA class II-restricted antigen presentation to T-cells through binding to immature and mature HLA class II complexes.</text>
</comment>
<comment type="subunit">
    <text evidence="2 7 8 9">Forms a complex with gp25 and gp85 via its N-terminus; this complex is used for invasion of B-lymphocytes. Interacts with human HLA-DRA and HLA-DRB1.</text>
</comment>
<comment type="subcellular location">
    <subcellularLocation>
        <location evidence="5">Virion membrane</location>
    </subcellularLocation>
    <subcellularLocation>
        <location evidence="10">Host membrane</location>
        <topology evidence="1">Single-pass membrane protein</topology>
    </subcellularLocation>
    <text evidence="10">virions synthesized in B-lymphocytes contain a lower amount of gp42 due to sequestration by cellular HLA class II protein, whereas virions made from epithelial cells has a higher amount of gp42.</text>
</comment>
<comment type="domain">
    <text>The C-lectin type domain is essential for virion-induced membrane fusion.</text>
</comment>
<comment type="similarity">
    <text evidence="10">Belongs to the epstein barr virus gp42 family.</text>
</comment>
<proteinExistence type="evidence at protein level"/>
<evidence type="ECO:0000255" key="1"/>
<evidence type="ECO:0000269" key="2">
    <source>
    </source>
</evidence>
<evidence type="ECO:0000269" key="3">
    <source>
    </source>
</evidence>
<evidence type="ECO:0000269" key="4">
    <source>
    </source>
</evidence>
<evidence type="ECO:0000269" key="5">
    <source>
    </source>
</evidence>
<evidence type="ECO:0000269" key="6">
    <source>
    </source>
</evidence>
<evidence type="ECO:0000269" key="7">
    <source>
    </source>
</evidence>
<evidence type="ECO:0000269" key="8">
    <source>
    </source>
</evidence>
<evidence type="ECO:0000269" key="9">
    <source>
    </source>
</evidence>
<evidence type="ECO:0000305" key="10"/>
<evidence type="ECO:0007829" key="11">
    <source>
        <dbReference type="PDB" id="3FD4"/>
    </source>
</evidence>
<evidence type="ECO:0007829" key="12">
    <source>
        <dbReference type="PDB" id="5W0K"/>
    </source>
</evidence>
<evidence type="ECO:0007829" key="13">
    <source>
        <dbReference type="PDB" id="8TNN"/>
    </source>
</evidence>
<evidence type="ECO:0007829" key="14">
    <source>
        <dbReference type="PDB" id="8TNT"/>
    </source>
</evidence>
<evidence type="ECO:0007829" key="15">
    <source>
        <dbReference type="PDB" id="8TOO"/>
    </source>
</evidence>